<comment type="function">
    <text evidence="1">Catalyzes the formation of S-adenosylmethionine (AdoMet) from methionine and ATP. The overall synthetic reaction is composed of two sequential steps, AdoMet formation and the subsequent tripolyphosphate hydrolysis which occurs prior to release of AdoMet from the enzyme.</text>
</comment>
<comment type="catalytic activity">
    <reaction evidence="1">
        <text>L-methionine + ATP + H2O = S-adenosyl-L-methionine + phosphate + diphosphate</text>
        <dbReference type="Rhea" id="RHEA:21080"/>
        <dbReference type="ChEBI" id="CHEBI:15377"/>
        <dbReference type="ChEBI" id="CHEBI:30616"/>
        <dbReference type="ChEBI" id="CHEBI:33019"/>
        <dbReference type="ChEBI" id="CHEBI:43474"/>
        <dbReference type="ChEBI" id="CHEBI:57844"/>
        <dbReference type="ChEBI" id="CHEBI:59789"/>
        <dbReference type="EC" id="2.5.1.6"/>
    </reaction>
</comment>
<comment type="cofactor">
    <cofactor evidence="1">
        <name>Mg(2+)</name>
        <dbReference type="ChEBI" id="CHEBI:18420"/>
    </cofactor>
    <text evidence="1">Binds 2 divalent ions per subunit.</text>
</comment>
<comment type="cofactor">
    <cofactor evidence="1">
        <name>K(+)</name>
        <dbReference type="ChEBI" id="CHEBI:29103"/>
    </cofactor>
    <text evidence="1">Binds 1 potassium ion per subunit.</text>
</comment>
<comment type="pathway">
    <text evidence="1">Amino-acid biosynthesis; S-adenosyl-L-methionine biosynthesis; S-adenosyl-L-methionine from L-methionine: step 1/1.</text>
</comment>
<comment type="subunit">
    <text evidence="1">Homotetramer; dimer of dimers.</text>
</comment>
<comment type="subcellular location">
    <subcellularLocation>
        <location evidence="1">Cytoplasm</location>
    </subcellularLocation>
</comment>
<comment type="similarity">
    <text evidence="1">Belongs to the AdoMet synthase family.</text>
</comment>
<organism>
    <name type="scientific">Pseudomonas aeruginosa (strain LESB58)</name>
    <dbReference type="NCBI Taxonomy" id="557722"/>
    <lineage>
        <taxon>Bacteria</taxon>
        <taxon>Pseudomonadati</taxon>
        <taxon>Pseudomonadota</taxon>
        <taxon>Gammaproteobacteria</taxon>
        <taxon>Pseudomonadales</taxon>
        <taxon>Pseudomonadaceae</taxon>
        <taxon>Pseudomonas</taxon>
    </lineage>
</organism>
<proteinExistence type="inferred from homology"/>
<name>METK_PSEA8</name>
<keyword id="KW-0067">ATP-binding</keyword>
<keyword id="KW-0963">Cytoplasm</keyword>
<keyword id="KW-0460">Magnesium</keyword>
<keyword id="KW-0479">Metal-binding</keyword>
<keyword id="KW-0547">Nucleotide-binding</keyword>
<keyword id="KW-0554">One-carbon metabolism</keyword>
<keyword id="KW-0630">Potassium</keyword>
<keyword id="KW-0808">Transferase</keyword>
<evidence type="ECO:0000255" key="1">
    <source>
        <dbReference type="HAMAP-Rule" id="MF_00086"/>
    </source>
</evidence>
<reference key="1">
    <citation type="journal article" date="2009" name="Genome Res.">
        <title>Newly introduced genomic prophage islands are critical determinants of in vivo competitiveness in the Liverpool epidemic strain of Pseudomonas aeruginosa.</title>
        <authorList>
            <person name="Winstanley C."/>
            <person name="Langille M.G.I."/>
            <person name="Fothergill J.L."/>
            <person name="Kukavica-Ibrulj I."/>
            <person name="Paradis-Bleau C."/>
            <person name="Sanschagrin F."/>
            <person name="Thomson N.R."/>
            <person name="Winsor G.L."/>
            <person name="Quail M.A."/>
            <person name="Lennard N."/>
            <person name="Bignell A."/>
            <person name="Clarke L."/>
            <person name="Seeger K."/>
            <person name="Saunders D."/>
            <person name="Harris D."/>
            <person name="Parkhill J."/>
            <person name="Hancock R.E.W."/>
            <person name="Brinkman F.S.L."/>
            <person name="Levesque R.C."/>
        </authorList>
    </citation>
    <scope>NUCLEOTIDE SEQUENCE [LARGE SCALE GENOMIC DNA]</scope>
    <source>
        <strain>LESB58</strain>
    </source>
</reference>
<accession>B7V4D3</accession>
<dbReference type="EC" id="2.5.1.6" evidence="1"/>
<dbReference type="EMBL" id="FM209186">
    <property type="protein sequence ID" value="CAW25271.1"/>
    <property type="molecule type" value="Genomic_DNA"/>
</dbReference>
<dbReference type="RefSeq" id="WP_003084948.1">
    <property type="nucleotide sequence ID" value="NC_011770.1"/>
</dbReference>
<dbReference type="SMR" id="B7V4D3"/>
<dbReference type="GeneID" id="77219067"/>
<dbReference type="KEGG" id="pag:PLES_05441"/>
<dbReference type="HOGENOM" id="CLU_041802_1_1_6"/>
<dbReference type="UniPathway" id="UPA00315">
    <property type="reaction ID" value="UER00080"/>
</dbReference>
<dbReference type="GO" id="GO:0005737">
    <property type="term" value="C:cytoplasm"/>
    <property type="evidence" value="ECO:0007669"/>
    <property type="project" value="UniProtKB-SubCell"/>
</dbReference>
<dbReference type="GO" id="GO:0005524">
    <property type="term" value="F:ATP binding"/>
    <property type="evidence" value="ECO:0007669"/>
    <property type="project" value="UniProtKB-UniRule"/>
</dbReference>
<dbReference type="GO" id="GO:0000287">
    <property type="term" value="F:magnesium ion binding"/>
    <property type="evidence" value="ECO:0007669"/>
    <property type="project" value="UniProtKB-UniRule"/>
</dbReference>
<dbReference type="GO" id="GO:0004478">
    <property type="term" value="F:methionine adenosyltransferase activity"/>
    <property type="evidence" value="ECO:0007669"/>
    <property type="project" value="UniProtKB-UniRule"/>
</dbReference>
<dbReference type="GO" id="GO:0006730">
    <property type="term" value="P:one-carbon metabolic process"/>
    <property type="evidence" value="ECO:0007669"/>
    <property type="project" value="UniProtKB-KW"/>
</dbReference>
<dbReference type="GO" id="GO:0006556">
    <property type="term" value="P:S-adenosylmethionine biosynthetic process"/>
    <property type="evidence" value="ECO:0007669"/>
    <property type="project" value="UniProtKB-UniRule"/>
</dbReference>
<dbReference type="CDD" id="cd18079">
    <property type="entry name" value="S-AdoMet_synt"/>
    <property type="match status" value="1"/>
</dbReference>
<dbReference type="FunFam" id="3.30.300.10:FF:000003">
    <property type="entry name" value="S-adenosylmethionine synthase"/>
    <property type="match status" value="1"/>
</dbReference>
<dbReference type="Gene3D" id="3.30.300.10">
    <property type="match status" value="3"/>
</dbReference>
<dbReference type="HAMAP" id="MF_00086">
    <property type="entry name" value="S_AdoMet_synth1"/>
    <property type="match status" value="1"/>
</dbReference>
<dbReference type="InterPro" id="IPR022631">
    <property type="entry name" value="ADOMET_SYNTHASE_CS"/>
</dbReference>
<dbReference type="InterPro" id="IPR022630">
    <property type="entry name" value="S-AdoMet_synt_C"/>
</dbReference>
<dbReference type="InterPro" id="IPR022629">
    <property type="entry name" value="S-AdoMet_synt_central"/>
</dbReference>
<dbReference type="InterPro" id="IPR022628">
    <property type="entry name" value="S-AdoMet_synt_N"/>
</dbReference>
<dbReference type="InterPro" id="IPR002133">
    <property type="entry name" value="S-AdoMet_synthetase"/>
</dbReference>
<dbReference type="InterPro" id="IPR022636">
    <property type="entry name" value="S-AdoMet_synthetase_sfam"/>
</dbReference>
<dbReference type="NCBIfam" id="TIGR01034">
    <property type="entry name" value="metK"/>
    <property type="match status" value="1"/>
</dbReference>
<dbReference type="PANTHER" id="PTHR11964">
    <property type="entry name" value="S-ADENOSYLMETHIONINE SYNTHETASE"/>
    <property type="match status" value="1"/>
</dbReference>
<dbReference type="Pfam" id="PF02773">
    <property type="entry name" value="S-AdoMet_synt_C"/>
    <property type="match status" value="1"/>
</dbReference>
<dbReference type="Pfam" id="PF02772">
    <property type="entry name" value="S-AdoMet_synt_M"/>
    <property type="match status" value="1"/>
</dbReference>
<dbReference type="Pfam" id="PF00438">
    <property type="entry name" value="S-AdoMet_synt_N"/>
    <property type="match status" value="1"/>
</dbReference>
<dbReference type="PIRSF" id="PIRSF000497">
    <property type="entry name" value="MAT"/>
    <property type="match status" value="1"/>
</dbReference>
<dbReference type="SUPFAM" id="SSF55973">
    <property type="entry name" value="S-adenosylmethionine synthetase"/>
    <property type="match status" value="3"/>
</dbReference>
<dbReference type="PROSITE" id="PS00376">
    <property type="entry name" value="ADOMET_SYNTHASE_1"/>
    <property type="match status" value="1"/>
</dbReference>
<dbReference type="PROSITE" id="PS00377">
    <property type="entry name" value="ADOMET_SYNTHASE_2"/>
    <property type="match status" value="1"/>
</dbReference>
<feature type="chain" id="PRO_1000196722" description="S-adenosylmethionine synthase">
    <location>
        <begin position="1"/>
        <end position="396"/>
    </location>
</feature>
<feature type="region of interest" description="Flexible loop" evidence="1">
    <location>
        <begin position="100"/>
        <end position="110"/>
    </location>
</feature>
<feature type="binding site" description="in other chain" evidence="1">
    <location>
        <position position="16"/>
    </location>
    <ligand>
        <name>ATP</name>
        <dbReference type="ChEBI" id="CHEBI:30616"/>
        <note>ligand shared between two neighboring subunits</note>
    </ligand>
</feature>
<feature type="binding site" evidence="1">
    <location>
        <position position="18"/>
    </location>
    <ligand>
        <name>Mg(2+)</name>
        <dbReference type="ChEBI" id="CHEBI:18420"/>
    </ligand>
</feature>
<feature type="binding site" evidence="1">
    <location>
        <position position="44"/>
    </location>
    <ligand>
        <name>K(+)</name>
        <dbReference type="ChEBI" id="CHEBI:29103"/>
    </ligand>
</feature>
<feature type="binding site" description="in other chain" evidence="1">
    <location>
        <position position="57"/>
    </location>
    <ligand>
        <name>L-methionine</name>
        <dbReference type="ChEBI" id="CHEBI:57844"/>
        <note>ligand shared between two neighboring subunits</note>
    </ligand>
</feature>
<feature type="binding site" description="in other chain" evidence="1">
    <location>
        <position position="100"/>
    </location>
    <ligand>
        <name>L-methionine</name>
        <dbReference type="ChEBI" id="CHEBI:57844"/>
        <note>ligand shared between two neighboring subunits</note>
    </ligand>
</feature>
<feature type="binding site" description="in other chain" evidence="1">
    <location>
        <begin position="165"/>
        <end position="167"/>
    </location>
    <ligand>
        <name>ATP</name>
        <dbReference type="ChEBI" id="CHEBI:30616"/>
        <note>ligand shared between two neighboring subunits</note>
    </ligand>
</feature>
<feature type="binding site" evidence="1">
    <location>
        <position position="240"/>
    </location>
    <ligand>
        <name>ATP</name>
        <dbReference type="ChEBI" id="CHEBI:30616"/>
        <note>ligand shared between two neighboring subunits</note>
    </ligand>
</feature>
<feature type="binding site" evidence="1">
    <location>
        <position position="240"/>
    </location>
    <ligand>
        <name>L-methionine</name>
        <dbReference type="ChEBI" id="CHEBI:57844"/>
        <note>ligand shared between two neighboring subunits</note>
    </ligand>
</feature>
<feature type="binding site" description="in other chain" evidence="1">
    <location>
        <begin position="246"/>
        <end position="247"/>
    </location>
    <ligand>
        <name>ATP</name>
        <dbReference type="ChEBI" id="CHEBI:30616"/>
        <note>ligand shared between two neighboring subunits</note>
    </ligand>
</feature>
<feature type="binding site" evidence="1">
    <location>
        <position position="263"/>
    </location>
    <ligand>
        <name>ATP</name>
        <dbReference type="ChEBI" id="CHEBI:30616"/>
        <note>ligand shared between two neighboring subunits</note>
    </ligand>
</feature>
<feature type="binding site" evidence="1">
    <location>
        <position position="267"/>
    </location>
    <ligand>
        <name>ATP</name>
        <dbReference type="ChEBI" id="CHEBI:30616"/>
        <note>ligand shared between two neighboring subunits</note>
    </ligand>
</feature>
<feature type="binding site" description="in other chain" evidence="1">
    <location>
        <position position="271"/>
    </location>
    <ligand>
        <name>L-methionine</name>
        <dbReference type="ChEBI" id="CHEBI:57844"/>
        <note>ligand shared between two neighboring subunits</note>
    </ligand>
</feature>
<gene>
    <name evidence="1" type="primary">metK</name>
    <name type="ordered locus">PLES_05441</name>
</gene>
<protein>
    <recommendedName>
        <fullName evidence="1">S-adenosylmethionine synthase</fullName>
        <shortName evidence="1">AdoMet synthase</shortName>
        <ecNumber evidence="1">2.5.1.6</ecNumber>
    </recommendedName>
    <alternativeName>
        <fullName evidence="1">MAT</fullName>
    </alternativeName>
    <alternativeName>
        <fullName evidence="1">Methionine adenosyltransferase</fullName>
    </alternativeName>
</protein>
<sequence>MSEYSVFTSESVSEGHPDKIADQISDAVLDAIIAKDKYARVACETLVKTGVAIIAGEVTTSAWVDLEELVRKVIIDIGYDSSDVGFDGATCGVLNIIGKQSVDINQGVDRAKPEDQGAGDQGLMFGYASNETDVLMPAPICFSHRLVERQAEARKSGLLPWLRPDAKSQVTCRYEGGKVVGIDAVVLSTQHNPEVSYNDLRDGVMELIIKQVLPAELLHKDTQFHINPTGNFVIGGPVGDCGLTGRKIIVDSYGGMARHGGGAFSGKDPSKVDRSAAYAGRYVAKNIVAAGLAERCEIQVSYAIGVAQPTSISINTFGTGKVSDEKIVQLVREHFDLRPYAITKMLDLLHPMYQPTAAYGHFGRHPFELTVDGDTFTAFTWEKTDKAALLRDAAGL</sequence>